<reference key="1">
    <citation type="journal article" date="2008" name="BMC Genomics">
        <title>Genome sequence and rapid evolution of the rice pathogen Xanthomonas oryzae pv. oryzae PXO99A.</title>
        <authorList>
            <person name="Salzberg S.L."/>
            <person name="Sommer D.D."/>
            <person name="Schatz M.C."/>
            <person name="Phillippy A.M."/>
            <person name="Rabinowicz P.D."/>
            <person name="Tsuge S."/>
            <person name="Furutani A."/>
            <person name="Ochiai H."/>
            <person name="Delcher A.L."/>
            <person name="Kelley D."/>
            <person name="Madupu R."/>
            <person name="Puiu D."/>
            <person name="Radune D."/>
            <person name="Shumway M."/>
            <person name="Trapnell C."/>
            <person name="Aparna G."/>
            <person name="Jha G."/>
            <person name="Pandey A."/>
            <person name="Patil P.B."/>
            <person name="Ishihara H."/>
            <person name="Meyer D.F."/>
            <person name="Szurek B."/>
            <person name="Verdier V."/>
            <person name="Koebnik R."/>
            <person name="Dow J.M."/>
            <person name="Ryan R.P."/>
            <person name="Hirata H."/>
            <person name="Tsuyumu S."/>
            <person name="Won Lee S."/>
            <person name="Seo Y.-S."/>
            <person name="Sriariyanum M."/>
            <person name="Ronald P.C."/>
            <person name="Sonti R.V."/>
            <person name="Van Sluys M.-A."/>
            <person name="Leach J.E."/>
            <person name="White F.F."/>
            <person name="Bogdanove A.J."/>
        </authorList>
    </citation>
    <scope>NUCLEOTIDE SEQUENCE [LARGE SCALE GENOMIC DNA]</scope>
    <source>
        <strain>PXO99A</strain>
    </source>
</reference>
<feature type="chain" id="PRO_1000100026" description="Uroporphyrinogen decarboxylase">
    <location>
        <begin position="1"/>
        <end position="354"/>
    </location>
</feature>
<feature type="binding site" evidence="1">
    <location>
        <begin position="25"/>
        <end position="29"/>
    </location>
    <ligand>
        <name>substrate</name>
    </ligand>
</feature>
<feature type="binding site" evidence="1">
    <location>
        <position position="75"/>
    </location>
    <ligand>
        <name>substrate</name>
    </ligand>
</feature>
<feature type="binding site" evidence="1">
    <location>
        <position position="152"/>
    </location>
    <ligand>
        <name>substrate</name>
    </ligand>
</feature>
<feature type="binding site" evidence="1">
    <location>
        <position position="207"/>
    </location>
    <ligand>
        <name>substrate</name>
    </ligand>
</feature>
<feature type="binding site" evidence="1">
    <location>
        <position position="330"/>
    </location>
    <ligand>
        <name>substrate</name>
    </ligand>
</feature>
<feature type="site" description="Transition state stabilizer" evidence="1">
    <location>
        <position position="75"/>
    </location>
</feature>
<gene>
    <name evidence="1" type="primary">hemE</name>
    <name type="ordered locus">PXO_02179</name>
</gene>
<organism>
    <name type="scientific">Xanthomonas oryzae pv. oryzae (strain PXO99A)</name>
    <dbReference type="NCBI Taxonomy" id="360094"/>
    <lineage>
        <taxon>Bacteria</taxon>
        <taxon>Pseudomonadati</taxon>
        <taxon>Pseudomonadota</taxon>
        <taxon>Gammaproteobacteria</taxon>
        <taxon>Lysobacterales</taxon>
        <taxon>Lysobacteraceae</taxon>
        <taxon>Xanthomonas</taxon>
    </lineage>
</organism>
<protein>
    <recommendedName>
        <fullName evidence="1">Uroporphyrinogen decarboxylase</fullName>
        <shortName evidence="1">UPD</shortName>
        <shortName evidence="1">URO-D</shortName>
        <ecNumber evidence="1">4.1.1.37</ecNumber>
    </recommendedName>
</protein>
<accession>B2SKP7</accession>
<sequence>MLKNDRLLRALNRQPVDRTPVWLMRQAGRYLPEYRATRARAGSFLSMAKNPDIACEVTLQPLQRFPLDAAILFSDILTIPDAMGLELYFVEGEGPKFRHPVRDAAAIHRLGVPDMETELRYVMDAVRVIRRELDGSVPLIGFSGSPWTLACYMIEGGGSKEYARIKAMAFNAPEVLHHLLGTVTDAVIAYLAAQRAAGAQALQVFDTWGGVLSPAMYHEFSLPYLTRIAHELERGEGAERTPLVLFGKGNGAYVADLAASGAEAVGVDWTISLADAAQRAGGRVALQGNLDPATLYGSPEAIRTEVGKTLDSYAQGNGGSREGHVLNLGHGMSPDMNPEHVGVLVEAVQRLSKR</sequence>
<comment type="function">
    <text evidence="1">Catalyzes the decarboxylation of four acetate groups of uroporphyrinogen-III to yield coproporphyrinogen-III.</text>
</comment>
<comment type="catalytic activity">
    <reaction evidence="1">
        <text>uroporphyrinogen III + 4 H(+) = coproporphyrinogen III + 4 CO2</text>
        <dbReference type="Rhea" id="RHEA:19865"/>
        <dbReference type="ChEBI" id="CHEBI:15378"/>
        <dbReference type="ChEBI" id="CHEBI:16526"/>
        <dbReference type="ChEBI" id="CHEBI:57308"/>
        <dbReference type="ChEBI" id="CHEBI:57309"/>
        <dbReference type="EC" id="4.1.1.37"/>
    </reaction>
</comment>
<comment type="pathway">
    <text evidence="1">Porphyrin-containing compound metabolism; protoporphyrin-IX biosynthesis; coproporphyrinogen-III from 5-aminolevulinate: step 4/4.</text>
</comment>
<comment type="subunit">
    <text evidence="1">Homodimer.</text>
</comment>
<comment type="subcellular location">
    <subcellularLocation>
        <location evidence="1">Cytoplasm</location>
    </subcellularLocation>
</comment>
<comment type="similarity">
    <text evidence="1">Belongs to the uroporphyrinogen decarboxylase family.</text>
</comment>
<name>DCUP_XANOP</name>
<evidence type="ECO:0000255" key="1">
    <source>
        <dbReference type="HAMAP-Rule" id="MF_00218"/>
    </source>
</evidence>
<dbReference type="EC" id="4.1.1.37" evidence="1"/>
<dbReference type="EMBL" id="CP000967">
    <property type="protein sequence ID" value="ACD60555.1"/>
    <property type="molecule type" value="Genomic_DNA"/>
</dbReference>
<dbReference type="RefSeq" id="WP_011258066.1">
    <property type="nucleotide sequence ID" value="NC_010717.2"/>
</dbReference>
<dbReference type="SMR" id="B2SKP7"/>
<dbReference type="KEGG" id="xop:PXO_02179"/>
<dbReference type="eggNOG" id="COG0407">
    <property type="taxonomic scope" value="Bacteria"/>
</dbReference>
<dbReference type="HOGENOM" id="CLU_040933_0_0_6"/>
<dbReference type="UniPathway" id="UPA00251">
    <property type="reaction ID" value="UER00321"/>
</dbReference>
<dbReference type="Proteomes" id="UP000001740">
    <property type="component" value="Chromosome"/>
</dbReference>
<dbReference type="GO" id="GO:0005829">
    <property type="term" value="C:cytosol"/>
    <property type="evidence" value="ECO:0007669"/>
    <property type="project" value="TreeGrafter"/>
</dbReference>
<dbReference type="GO" id="GO:0004853">
    <property type="term" value="F:uroporphyrinogen decarboxylase activity"/>
    <property type="evidence" value="ECO:0007669"/>
    <property type="project" value="UniProtKB-UniRule"/>
</dbReference>
<dbReference type="GO" id="GO:0019353">
    <property type="term" value="P:protoporphyrinogen IX biosynthetic process from glutamate"/>
    <property type="evidence" value="ECO:0007669"/>
    <property type="project" value="TreeGrafter"/>
</dbReference>
<dbReference type="CDD" id="cd00717">
    <property type="entry name" value="URO-D"/>
    <property type="match status" value="1"/>
</dbReference>
<dbReference type="FunFam" id="3.20.20.210:FF:000001">
    <property type="entry name" value="Uroporphyrinogen decarboxylase"/>
    <property type="match status" value="1"/>
</dbReference>
<dbReference type="Gene3D" id="3.20.20.210">
    <property type="match status" value="1"/>
</dbReference>
<dbReference type="HAMAP" id="MF_00218">
    <property type="entry name" value="URO_D"/>
    <property type="match status" value="1"/>
</dbReference>
<dbReference type="InterPro" id="IPR038071">
    <property type="entry name" value="UROD/MetE-like_sf"/>
</dbReference>
<dbReference type="InterPro" id="IPR006361">
    <property type="entry name" value="Uroporphyrinogen_deCO2ase_HemE"/>
</dbReference>
<dbReference type="InterPro" id="IPR000257">
    <property type="entry name" value="Uroporphyrinogen_deCOase"/>
</dbReference>
<dbReference type="NCBIfam" id="TIGR01464">
    <property type="entry name" value="hemE"/>
    <property type="match status" value="1"/>
</dbReference>
<dbReference type="PANTHER" id="PTHR21091">
    <property type="entry name" value="METHYLTETRAHYDROFOLATE:HOMOCYSTEINE METHYLTRANSFERASE RELATED"/>
    <property type="match status" value="1"/>
</dbReference>
<dbReference type="PANTHER" id="PTHR21091:SF169">
    <property type="entry name" value="UROPORPHYRINOGEN DECARBOXYLASE"/>
    <property type="match status" value="1"/>
</dbReference>
<dbReference type="Pfam" id="PF01208">
    <property type="entry name" value="URO-D"/>
    <property type="match status" value="1"/>
</dbReference>
<dbReference type="SUPFAM" id="SSF51726">
    <property type="entry name" value="UROD/MetE-like"/>
    <property type="match status" value="1"/>
</dbReference>
<dbReference type="PROSITE" id="PS00906">
    <property type="entry name" value="UROD_1"/>
    <property type="match status" value="1"/>
</dbReference>
<dbReference type="PROSITE" id="PS00907">
    <property type="entry name" value="UROD_2"/>
    <property type="match status" value="1"/>
</dbReference>
<keyword id="KW-0963">Cytoplasm</keyword>
<keyword id="KW-0210">Decarboxylase</keyword>
<keyword id="KW-0456">Lyase</keyword>
<keyword id="KW-0627">Porphyrin biosynthesis</keyword>
<proteinExistence type="inferred from homology"/>